<keyword id="KW-0072">Autophagy</keyword>
<keyword id="KW-0963">Cytoplasm</keyword>
<keyword id="KW-0472">Membrane</keyword>
<keyword id="KW-0653">Protein transport</keyword>
<keyword id="KW-0677">Repeat</keyword>
<keyword id="KW-0813">Transport</keyword>
<keyword id="KW-0926">Vacuole</keyword>
<keyword id="KW-0853">WD repeat</keyword>
<feature type="chain" id="PRO_0000050880" description="Autophagy-related protein 21">
    <location>
        <begin position="1"/>
        <end position="388"/>
    </location>
</feature>
<feature type="repeat" description="WD 1">
    <location>
        <begin position="179"/>
        <end position="219"/>
    </location>
</feature>
<feature type="repeat" description="WD 2">
    <location>
        <begin position="224"/>
        <end position="263"/>
    </location>
</feature>
<feature type="short sequence motif" description="L/FRRG motif" evidence="2">
    <location>
        <begin position="220"/>
        <end position="224"/>
    </location>
</feature>
<dbReference type="EMBL" id="AY383554">
    <property type="protein sequence ID" value="AAR87854.1"/>
    <property type="molecule type" value="Genomic_DNA"/>
</dbReference>
<dbReference type="SMR" id="Q5QJC0"/>
<dbReference type="PhylomeDB" id="Q5QJC0"/>
<dbReference type="GO" id="GO:0005774">
    <property type="term" value="C:vacuolar membrane"/>
    <property type="evidence" value="ECO:0007669"/>
    <property type="project" value="UniProtKB-SubCell"/>
</dbReference>
<dbReference type="GO" id="GO:0006914">
    <property type="term" value="P:autophagy"/>
    <property type="evidence" value="ECO:0007669"/>
    <property type="project" value="UniProtKB-KW"/>
</dbReference>
<dbReference type="GO" id="GO:0015031">
    <property type="term" value="P:protein transport"/>
    <property type="evidence" value="ECO:0007669"/>
    <property type="project" value="UniProtKB-KW"/>
</dbReference>
<dbReference type="Gene3D" id="2.130.10.10">
    <property type="entry name" value="YVTN repeat-like/Quinoprotein amine dehydrogenase"/>
    <property type="match status" value="1"/>
</dbReference>
<dbReference type="InterPro" id="IPR048720">
    <property type="entry name" value="PROPPIN"/>
</dbReference>
<dbReference type="InterPro" id="IPR015943">
    <property type="entry name" value="WD40/YVTN_repeat-like_dom_sf"/>
</dbReference>
<dbReference type="InterPro" id="IPR036322">
    <property type="entry name" value="WD40_repeat_dom_sf"/>
</dbReference>
<dbReference type="InterPro" id="IPR001680">
    <property type="entry name" value="WD40_rpt"/>
</dbReference>
<dbReference type="PANTHER" id="PTHR11227">
    <property type="entry name" value="WD-REPEAT PROTEIN INTERACTING WITH PHOSPHOINOSIDES WIPI -RELATED"/>
    <property type="match status" value="1"/>
</dbReference>
<dbReference type="Pfam" id="PF21032">
    <property type="entry name" value="PROPPIN"/>
    <property type="match status" value="1"/>
</dbReference>
<dbReference type="SMART" id="SM00320">
    <property type="entry name" value="WD40"/>
    <property type="match status" value="2"/>
</dbReference>
<dbReference type="SUPFAM" id="SSF50978">
    <property type="entry name" value="WD40 repeat-like"/>
    <property type="match status" value="1"/>
</dbReference>
<gene>
    <name type="primary">ATG21</name>
</gene>
<comment type="function">
    <text evidence="3">Involved in peroxisome sequestration to the vacuole during macropexophagy. Also required for microautophagy.</text>
</comment>
<comment type="subcellular location">
    <subcellularLocation>
        <location evidence="3">Cytoplasm</location>
    </subcellularLocation>
    <subcellularLocation>
        <location evidence="3">Membrane</location>
        <topology evidence="3">Peripheral membrane protein</topology>
    </subcellularLocation>
    <subcellularLocation>
        <location evidence="3">Vacuole membrane</location>
        <topology evidence="3">Peripheral membrane protein</topology>
    </subcellularLocation>
    <text>Vacuolar and other perivacuolar punctate structures.</text>
</comment>
<comment type="domain">
    <text evidence="1">Contains a beta-propeller domain involved in specific binding to phosphatidylinositol 3,5-bisphosphate (PIP2).</text>
</comment>
<comment type="domain">
    <text evidence="2">The L/FRRG motif is essential for the cytoplasm to vacuole transport (Cvt) pathway and for the recruitment of ATG8 and ATG16 to the PAS in nutrient-rich medium and in both its recruitment to and dissociation from the PAS under starvation conditions.</text>
</comment>
<comment type="similarity">
    <text evidence="4">Belongs to the WD repeat PROPPIN family.</text>
</comment>
<evidence type="ECO:0000250" key="1"/>
<evidence type="ECO:0000250" key="2">
    <source>
        <dbReference type="UniProtKB" id="Q02887"/>
    </source>
</evidence>
<evidence type="ECO:0000269" key="3">
    <source>
    </source>
</evidence>
<evidence type="ECO:0000305" key="4"/>
<name>ATG21_PICAN</name>
<accession>Q5QJC0</accession>
<organism>
    <name type="scientific">Pichia angusta</name>
    <name type="common">Yeast</name>
    <name type="synonym">Hansenula polymorpha</name>
    <dbReference type="NCBI Taxonomy" id="870730"/>
    <lineage>
        <taxon>Eukaryota</taxon>
        <taxon>Fungi</taxon>
        <taxon>Dikarya</taxon>
        <taxon>Ascomycota</taxon>
        <taxon>Saccharomycotina</taxon>
        <taxon>Pichiomycetes</taxon>
        <taxon>Pichiales</taxon>
        <taxon>Pichiaceae</taxon>
        <taxon>Ogataea</taxon>
    </lineage>
</organism>
<reference key="1">
    <citation type="journal article" date="1998" name="Curr. Genet.">
        <title>The Hansenula polymorpha per6 mutant is affected in two adjacent genes which encode dihydroxyacetone kinase and a novel protein, Pak1p, involved in peroxisome integrity.</title>
        <authorList>
            <person name="van der Klei I.J."/>
            <person name="van der Heide M."/>
            <person name="Baerends R.J.S."/>
            <person name="Rechinger K.-B."/>
            <person name="Nicolay K."/>
            <person name="Kiel J.A.K.W."/>
            <person name="Veenhuis M."/>
        </authorList>
    </citation>
    <scope>NUCLEOTIDE SEQUENCE [GENOMIC DNA]</scope>
    <source>
        <strain>ATCC 34438 / CBS 4732 / DSM 70277 / JCM 3621 / NBRC 1476 / NRRL Y-5445</strain>
    </source>
</reference>
<reference key="2">
    <citation type="journal article" date="2004" name="FEBS Lett.">
        <title>Atg21p is essential for macropexophagy and microautophagy in the yeast Hansenula polymorpha.</title>
        <authorList>
            <person name="Leao-Helder A.N."/>
            <person name="Krikken A.M."/>
            <person name="Gellissen G."/>
            <person name="van der Klei I.J."/>
            <person name="Veenhuis M."/>
            <person name="Kiel J.A.K.W."/>
        </authorList>
    </citation>
    <scope>FUNCTION</scope>
    <scope>SUBCELLULAR LOCATION</scope>
    <source>
        <strain>ATCC 34438 / CBS 4732 / DSM 70277 / JCM 3621 / NBRC 1476 / NRRL Y-5445</strain>
    </source>
</reference>
<sequence length="388" mass="42854">MALRSISFNQDYTCLAAGFDAAYKVYNCDPFGECFQKADDGGANLVEMLFSTSLIAVVGIGDKPANTMRKLKIINTKRKAVICELTFPTAILYVKMNRKRLVVVLVDQIFVYDVSCMKLLHSIEASAGLDDRIICDLCADDESVLVFQQSGSSDELAANAGTVVVFDALQIQPINVIECHRSPLQRIAVSKDGRLLATASVKGTIVRVFRVADGRKVHEFRRGSYTAQISCLSFNVDATVLCCSSNTGTVHFFRLDDVDRRRSTGSIDANIDGSETLPRESSITEEESSEINRLINSQLGGHNGFAKKKSAESLKNFIWSKSKTYLPSQINSILEPKRDYAFIKLTTEVESVVGLVDNNCYVATRAGDFFVYSVQPGQCVLLKHYKIE</sequence>
<protein>
    <recommendedName>
        <fullName>Autophagy-related protein 21</fullName>
    </recommendedName>
</protein>
<proteinExistence type="inferred from homology"/>